<dbReference type="EMBL" id="L42023">
    <property type="protein sequence ID" value="AAC22294.1"/>
    <property type="status" value="ALT_SEQ"/>
    <property type="molecule type" value="Genomic_DNA"/>
</dbReference>
<dbReference type="PIR" id="B64083">
    <property type="entry name" value="B64083"/>
</dbReference>
<dbReference type="RefSeq" id="NP_438795.2">
    <property type="nucleotide sequence ID" value="NC_000907.1"/>
</dbReference>
<dbReference type="SMR" id="P44795"/>
<dbReference type="STRING" id="71421.HI_0635"/>
<dbReference type="EnsemblBacteria" id="AAC22294">
    <property type="protein sequence ID" value="AAC22294"/>
    <property type="gene ID" value="HI_0635"/>
</dbReference>
<dbReference type="KEGG" id="hin:HI_0635"/>
<dbReference type="PATRIC" id="fig|71421.8.peg.663"/>
<dbReference type="eggNOG" id="COG1629">
    <property type="taxonomic scope" value="Bacteria"/>
</dbReference>
<dbReference type="eggNOG" id="COG4771">
    <property type="taxonomic scope" value="Bacteria"/>
</dbReference>
<dbReference type="HOGENOM" id="CLU_008287_19_0_6"/>
<dbReference type="OrthoDB" id="9764669at2"/>
<dbReference type="PhylomeDB" id="P44795"/>
<dbReference type="Proteomes" id="UP000000579">
    <property type="component" value="Chromosome"/>
</dbReference>
<dbReference type="GO" id="GO:0009279">
    <property type="term" value="C:cell outer membrane"/>
    <property type="evidence" value="ECO:0000318"/>
    <property type="project" value="GO_Central"/>
</dbReference>
<dbReference type="GO" id="GO:0015344">
    <property type="term" value="F:siderophore uptake transmembrane transporter activity"/>
    <property type="evidence" value="ECO:0000318"/>
    <property type="project" value="GO_Central"/>
</dbReference>
<dbReference type="GO" id="GO:0044718">
    <property type="term" value="P:siderophore transmembrane transport"/>
    <property type="evidence" value="ECO:0000318"/>
    <property type="project" value="GO_Central"/>
</dbReference>
<dbReference type="Gene3D" id="2.40.170.20">
    <property type="entry name" value="TonB-dependent receptor, beta-barrel domain"/>
    <property type="match status" value="1"/>
</dbReference>
<dbReference type="Gene3D" id="2.170.130.10">
    <property type="entry name" value="TonB-dependent receptor, plug domain"/>
    <property type="match status" value="1"/>
</dbReference>
<dbReference type="InterPro" id="IPR012910">
    <property type="entry name" value="Plug_dom"/>
</dbReference>
<dbReference type="InterPro" id="IPR037066">
    <property type="entry name" value="Plug_dom_sf"/>
</dbReference>
<dbReference type="InterPro" id="IPR006970">
    <property type="entry name" value="PT"/>
</dbReference>
<dbReference type="InterPro" id="IPR039426">
    <property type="entry name" value="TonB-dep_rcpt-like"/>
</dbReference>
<dbReference type="InterPro" id="IPR000531">
    <property type="entry name" value="TonB-dep_rcpt_b-brl"/>
</dbReference>
<dbReference type="InterPro" id="IPR036942">
    <property type="entry name" value="TonB_rcpt_b-brl_sf"/>
</dbReference>
<dbReference type="InterPro" id="IPR010917">
    <property type="entry name" value="TonB_rcpt_CS"/>
</dbReference>
<dbReference type="PANTHER" id="PTHR30069:SF29">
    <property type="entry name" value="HEMOGLOBIN AND HEMOGLOBIN-HAPTOGLOBIN-BINDING PROTEIN 1-RELATED"/>
    <property type="match status" value="1"/>
</dbReference>
<dbReference type="PANTHER" id="PTHR30069">
    <property type="entry name" value="TONB-DEPENDENT OUTER MEMBRANE RECEPTOR"/>
    <property type="match status" value="1"/>
</dbReference>
<dbReference type="Pfam" id="PF07715">
    <property type="entry name" value="Plug"/>
    <property type="match status" value="1"/>
</dbReference>
<dbReference type="Pfam" id="PF04886">
    <property type="entry name" value="PT"/>
    <property type="match status" value="1"/>
</dbReference>
<dbReference type="Pfam" id="PF00593">
    <property type="entry name" value="TonB_dep_Rec_b-barrel"/>
    <property type="match status" value="1"/>
</dbReference>
<dbReference type="SUPFAM" id="SSF56935">
    <property type="entry name" value="Porins"/>
    <property type="match status" value="1"/>
</dbReference>
<dbReference type="PROSITE" id="PS01156">
    <property type="entry name" value="TONB_DEPENDENT_REC_2"/>
    <property type="match status" value="1"/>
</dbReference>
<dbReference type="PROSITE" id="PS52016">
    <property type="entry name" value="TONB_DEPENDENT_REC_3"/>
    <property type="match status" value="1"/>
</dbReference>
<proteinExistence type="evidence at protein level"/>
<sequence length="1063" mass="121161">MTNFKFSLLACSIAFALNASIAYAAQPTNQPTNQPTNQPTNQPTNQPTNQPTNQNSNVSEQLEQINVSGSSENINVKEKKVGETQISAKKLAKQQASDSRDLVRYETGITVVETGRTGASGYAVRGVDENRVGIMVDGLRQAETLSSQGFKELFEGYGNFNNTRNSIEIENVKTATITKGADSLKSGSGALGGSVIFETKDARDYLIDKDYYLSYKRGYQTMNNQNLKTLTLAGRSKKFDILIIDTTRDGHEIENYDYKIYPNKQADLRAVGPTREKADPYQITRQSTLIKLGFQPNENHRLSVALDDSTLETKGIDLSYALRPYSTANNEKYGERIINDQSKRKNIQFSYENFSQTPFWDHIKLSYSSQKITNKARSDEYCHQSTCNGVSNPQGLHLVEEKGVYKIKDKYGGELESKEIGWSHEFKNSKGEDADKDISQRSSLDSVLINCEKLDCSKKFRIYQEYDENSSEKYTYDDREIEVGTLPNGKKYGKIPLKKGKTPSWNGFPQETARFLFPKSYGYSTDFVNDRDLNTHTQQIKLDLDKEFHLWHTQHQLKYGGLYEKTLKSMVNHQYNTAANVQWWADYFFCARAKGGNLGEKKTPHPNVSVAGCVNGTPLHSDIGKDTYLIPVTTKNNVLYFGDNVQLTSWLGLDLNYRYDHVKYLPGYDEKTPVPGGLIAGIFVPFNEKDVVYGAYVPSGYKDCRYNTECYKKNFEENLALLLRKTDYKHHSYNLGLNLDPTDWLRVQLKYANAFRAPTSDEIYMTFKHPDFSIGPNTNLKAETAKTKEVAFTFYKENSYLTLSAFQSDYRNFIDLVFEKNKQIDKGSAIEYPFYQNQNRDQARVRGIEIASRLEMGDLFEKLQGFHLGYKLTYQKGRIKDNKLRSGYAEFLKLNPQYTAIASQDQPMNALQPTTSVYNIGYDAPSKKWGMDVYITDVAAKKAKDSFNSQWTSMVKRKENIYGTERTVPATQANGKDVKDSRGLWRNNRYTVIDTIAYWKPIKNLTFTAGVYNLTNKKYLTWDSARSVRHLGTINRVETATGKGLNRFYAPGRNYRMSVQFEF</sequence>
<evidence type="ECO:0000250" key="1"/>
<evidence type="ECO:0000255" key="2"/>
<evidence type="ECO:0000255" key="3">
    <source>
        <dbReference type="PROSITE-ProRule" id="PRU01360"/>
    </source>
</evidence>
<evidence type="ECO:0000256" key="4">
    <source>
        <dbReference type="SAM" id="MobiDB-lite"/>
    </source>
</evidence>
<evidence type="ECO:0000305" key="5"/>
<protein>
    <recommendedName>
        <fullName>Probable hemoglobin and hemoglobin-haptoglobin-binding protein 1</fullName>
    </recommendedName>
</protein>
<accession>P44795</accession>
<feature type="signal peptide" evidence="2">
    <location>
        <begin position="1"/>
        <end position="24"/>
    </location>
</feature>
<feature type="chain" id="PRO_0000034785" description="Probable hemoglobin and hemoglobin-haptoglobin-binding protein 1">
    <location>
        <begin position="25"/>
        <end position="1063"/>
    </location>
</feature>
<feature type="repeat" description="1">
    <location>
        <begin position="26"/>
        <end position="29"/>
    </location>
</feature>
<feature type="repeat" description="2">
    <location>
        <begin position="30"/>
        <end position="33"/>
    </location>
</feature>
<feature type="repeat" description="3">
    <location>
        <begin position="34"/>
        <end position="37"/>
    </location>
</feature>
<feature type="repeat" description="4">
    <location>
        <begin position="38"/>
        <end position="41"/>
    </location>
</feature>
<feature type="repeat" description="5">
    <location>
        <begin position="42"/>
        <end position="45"/>
    </location>
</feature>
<feature type="repeat" description="6">
    <location>
        <begin position="46"/>
        <end position="49"/>
    </location>
</feature>
<feature type="repeat" description="7">
    <location>
        <begin position="50"/>
        <end position="53"/>
    </location>
</feature>
<feature type="domain" description="TBDR plug" evidence="3">
    <location>
        <begin position="66"/>
        <end position="200"/>
    </location>
</feature>
<feature type="domain" description="TBDR beta-barrel" evidence="3">
    <location>
        <begin position="208"/>
        <end position="1063"/>
    </location>
</feature>
<feature type="region of interest" description="7 X 4 AA tandem repeats of Q-P-T-N">
    <location>
        <begin position="26"/>
        <end position="53"/>
    </location>
</feature>
<feature type="region of interest" description="Disordered" evidence="4">
    <location>
        <begin position="28"/>
        <end position="57"/>
    </location>
</feature>
<feature type="short sequence motif" description="TonB box">
    <location>
        <begin position="63"/>
        <end position="70"/>
    </location>
</feature>
<feature type="short sequence motif" description="TonB C-terminal box">
    <location>
        <begin position="1046"/>
        <end position="1063"/>
    </location>
</feature>
<feature type="compositionally biased region" description="Low complexity" evidence="4">
    <location>
        <begin position="28"/>
        <end position="55"/>
    </location>
</feature>
<name>HGP1_HAEIN</name>
<reference key="1">
    <citation type="journal article" date="1995" name="Science">
        <title>Whole-genome random sequencing and assembly of Haemophilus influenzae Rd.</title>
        <authorList>
            <person name="Fleischmann R.D."/>
            <person name="Adams M.D."/>
            <person name="White O."/>
            <person name="Clayton R.A."/>
            <person name="Kirkness E.F."/>
            <person name="Kerlavage A.R."/>
            <person name="Bult C.J."/>
            <person name="Tomb J.-F."/>
            <person name="Dougherty B.A."/>
            <person name="Merrick J.M."/>
            <person name="McKenney K."/>
            <person name="Sutton G.G."/>
            <person name="FitzHugh W."/>
            <person name="Fields C.A."/>
            <person name="Gocayne J.D."/>
            <person name="Scott J.D."/>
            <person name="Shirley R."/>
            <person name="Liu L.-I."/>
            <person name="Glodek A."/>
            <person name="Kelley J.M."/>
            <person name="Weidman J.F."/>
            <person name="Phillips C.A."/>
            <person name="Spriggs T."/>
            <person name="Hedblom E."/>
            <person name="Cotton M.D."/>
            <person name="Utterback T.R."/>
            <person name="Hanna M.C."/>
            <person name="Nguyen D.T."/>
            <person name="Saudek D.M."/>
            <person name="Brandon R.C."/>
            <person name="Fine L.D."/>
            <person name="Fritchman J.L."/>
            <person name="Fuhrmann J.L."/>
            <person name="Geoghagen N.S.M."/>
            <person name="Gnehm C.L."/>
            <person name="McDonald L.A."/>
            <person name="Small K.V."/>
            <person name="Fraser C.M."/>
            <person name="Smith H.O."/>
            <person name="Venter J.C."/>
        </authorList>
    </citation>
    <scope>NUCLEOTIDE SEQUENCE [LARGE SCALE GENOMIC DNA]</scope>
    <source>
        <strain>ATCC 51907 / DSM 11121 / KW20 / Rd</strain>
    </source>
</reference>
<reference key="2">
    <citation type="journal article" date="2000" name="Electrophoresis">
        <title>Two-dimensional map of the proteome of Haemophilus influenzae.</title>
        <authorList>
            <person name="Langen H."/>
            <person name="Takacs B."/>
            <person name="Evers S."/>
            <person name="Berndt P."/>
            <person name="Lahm H.W."/>
            <person name="Wipf B."/>
            <person name="Gray C."/>
            <person name="Fountoulakis M."/>
        </authorList>
    </citation>
    <scope>IDENTIFICATION BY MASS SPECTROMETRY</scope>
    <source>
        <strain>ATCC 51907 / DSM 11121 / KW20 / Rd</strain>
    </source>
</reference>
<keyword id="KW-0998">Cell outer membrane</keyword>
<keyword id="KW-0472">Membrane</keyword>
<keyword id="KW-0675">Receptor</keyword>
<keyword id="KW-1185">Reference proteome</keyword>
<keyword id="KW-0677">Repeat</keyword>
<keyword id="KW-0732">Signal</keyword>
<keyword id="KW-0798">TonB box</keyword>
<keyword id="KW-0812">Transmembrane</keyword>
<keyword id="KW-1134">Transmembrane beta strand</keyword>
<keyword id="KW-0813">Transport</keyword>
<gene>
    <name type="ordered locus">HI_0635</name>
</gene>
<comment type="function">
    <text evidence="1">Acts as a receptor for hemoglobin or the hemoglobin/haptoglobin complex of the human host and is required for heme uptake.</text>
</comment>
<comment type="subcellular location">
    <subcellularLocation>
        <location evidence="3">Cell outer membrane</location>
        <topology evidence="3">Multi-pass membrane protein</topology>
    </subcellularLocation>
</comment>
<comment type="miscellaneous">
    <text evidence="1">This protein is subject to phase-variable expression associated with alteration in the length of the CCAA repeat region. This mechanism is called slipped-strand mispairing. Addition or loss of CCAA repeat units would change the reading frame and result in introduction of stop codons downstream of the repeat region. This may be a mechanism of regulation and a way to avoid the immunological response of the host (By similarity).</text>
</comment>
<comment type="similarity">
    <text evidence="5">Belongs to the TonB-dependent receptor family. Hemoglobin/haptoglobin binding protein subfamily.</text>
</comment>
<comment type="sequence caution" evidence="5">
    <conflict type="frameshift">
        <sequence resource="EMBL-CDS" id="AAC22294"/>
    </conflict>
</comment>
<organism>
    <name type="scientific">Haemophilus influenzae (strain ATCC 51907 / DSM 11121 / KW20 / Rd)</name>
    <dbReference type="NCBI Taxonomy" id="71421"/>
    <lineage>
        <taxon>Bacteria</taxon>
        <taxon>Pseudomonadati</taxon>
        <taxon>Pseudomonadota</taxon>
        <taxon>Gammaproteobacteria</taxon>
        <taxon>Pasteurellales</taxon>
        <taxon>Pasteurellaceae</taxon>
        <taxon>Haemophilus</taxon>
    </lineage>
</organism>